<reference key="1">
    <citation type="journal article" date="1985" name="J. Mol. Biol.">
        <title>Nucleotide sequence of the genes involved in phosphate transport and regulation of the phosphate regulon in Escherichia coli.</title>
        <authorList>
            <person name="Amemura M."/>
            <person name="Makino K."/>
            <person name="Shinagawa H."/>
            <person name="Kobayashi A."/>
            <person name="Nakata A."/>
        </authorList>
    </citation>
    <scope>NUCLEOTIDE SEQUENCE [GENOMIC DNA]</scope>
</reference>
<reference key="2">
    <citation type="journal article" date="1985" name="J. Bacteriol.">
        <title>Phosphate-specific transport system of Escherichia coli: nucleotide sequence and gene-polypeptide relationships.</title>
        <authorList>
            <person name="Surin B.P."/>
            <person name="Rosenberg H."/>
            <person name="Cox G.B."/>
        </authorList>
    </citation>
    <scope>NUCLEOTIDE SEQUENCE [GENOMIC DNA]</scope>
</reference>
<reference key="3">
    <citation type="journal article" date="1993" name="Genomics">
        <title>DNA sequence and analysis of 136 kilobases of the Escherichia coli genome: organizational symmetry around the origin of replication.</title>
        <authorList>
            <person name="Burland V.D."/>
            <person name="Plunkett G. III"/>
            <person name="Daniels D.L."/>
            <person name="Blattner F.R."/>
        </authorList>
    </citation>
    <scope>NUCLEOTIDE SEQUENCE [LARGE SCALE GENOMIC DNA]</scope>
    <source>
        <strain>K12 / MG1655 / ATCC 47076</strain>
    </source>
</reference>
<reference key="4">
    <citation type="journal article" date="1997" name="Science">
        <title>The complete genome sequence of Escherichia coli K-12.</title>
        <authorList>
            <person name="Blattner F.R."/>
            <person name="Plunkett G. III"/>
            <person name="Bloch C.A."/>
            <person name="Perna N.T."/>
            <person name="Burland V."/>
            <person name="Riley M."/>
            <person name="Collado-Vides J."/>
            <person name="Glasner J.D."/>
            <person name="Rode C.K."/>
            <person name="Mayhew G.F."/>
            <person name="Gregor J."/>
            <person name="Davis N.W."/>
            <person name="Kirkpatrick H.A."/>
            <person name="Goeden M.A."/>
            <person name="Rose D.J."/>
            <person name="Mau B."/>
            <person name="Shao Y."/>
        </authorList>
    </citation>
    <scope>NUCLEOTIDE SEQUENCE [LARGE SCALE GENOMIC DNA]</scope>
    <source>
        <strain>K12 / MG1655 / ATCC 47076</strain>
    </source>
</reference>
<reference key="5">
    <citation type="journal article" date="2006" name="Mol. Syst. Biol.">
        <title>Highly accurate genome sequences of Escherichia coli K-12 strains MG1655 and W3110.</title>
        <authorList>
            <person name="Hayashi K."/>
            <person name="Morooka N."/>
            <person name="Yamamoto Y."/>
            <person name="Fujita K."/>
            <person name="Isono K."/>
            <person name="Choi S."/>
            <person name="Ohtsubo E."/>
            <person name="Baba T."/>
            <person name="Wanner B.L."/>
            <person name="Mori H."/>
            <person name="Horiuchi T."/>
        </authorList>
    </citation>
    <scope>NUCLEOTIDE SEQUENCE [LARGE SCALE GENOMIC DNA]</scope>
    <source>
        <strain>K12 / W3110 / ATCC 27325 / DSM 5911</strain>
    </source>
</reference>
<reference key="6">
    <citation type="journal article" date="1992" name="J. Biol. Chem.">
        <title>Mutational analysis of the Escherichia coli phosphate-specific transport system, a member of the traffic ATPase (or ABC) family of membrane transporters. A role for proline residues in transmembrane helices.</title>
        <authorList>
            <person name="Webb D.C."/>
            <person name="Rosenberg H."/>
            <person name="Cox G.B."/>
        </authorList>
    </citation>
    <scope>MUTAGENESIS</scope>
</reference>
<reference key="7">
    <citation type="journal article" date="2002" name="Proc. Natl. Acad. Sci. U.S.A.">
        <title>Rapid topology mapping of Escherichia coli inner-membrane proteins by prediction and PhoA/GFP fusion analysis.</title>
        <authorList>
            <person name="Drew D."/>
            <person name="Sjoestrand D."/>
            <person name="Nilsson J."/>
            <person name="Urbig T."/>
            <person name="Chin C.-N."/>
            <person name="de Gier J.-W."/>
            <person name="von Heijne G."/>
        </authorList>
    </citation>
    <scope>TOPOLOGY</scope>
    <source>
        <strain>K12 / JM109 / ATCC 53323</strain>
    </source>
</reference>
<reference key="8">
    <citation type="journal article" date="2005" name="Science">
        <title>Global topology analysis of the Escherichia coli inner membrane proteome.</title>
        <authorList>
            <person name="Daley D.O."/>
            <person name="Rapp M."/>
            <person name="Granseth E."/>
            <person name="Melen K."/>
            <person name="Drew D."/>
            <person name="von Heijne G."/>
        </authorList>
    </citation>
    <scope>SUBCELLULAR LOCATION</scope>
    <source>
        <strain>K12 / MG1655 / ATCC 47076</strain>
    </source>
</reference>
<keyword id="KW-0997">Cell inner membrane</keyword>
<keyword id="KW-1003">Cell membrane</keyword>
<keyword id="KW-0472">Membrane</keyword>
<keyword id="KW-0592">Phosphate transport</keyword>
<keyword id="KW-1185">Reference proteome</keyword>
<keyword id="KW-0812">Transmembrane</keyword>
<keyword id="KW-1133">Transmembrane helix</keyword>
<keyword id="KW-0813">Transport</keyword>
<organism>
    <name type="scientific">Escherichia coli (strain K12)</name>
    <dbReference type="NCBI Taxonomy" id="83333"/>
    <lineage>
        <taxon>Bacteria</taxon>
        <taxon>Pseudomonadati</taxon>
        <taxon>Pseudomonadota</taxon>
        <taxon>Gammaproteobacteria</taxon>
        <taxon>Enterobacterales</taxon>
        <taxon>Enterobacteriaceae</taxon>
        <taxon>Escherichia</taxon>
    </lineage>
</organism>
<proteinExistence type="evidence at protein level"/>
<name>PSTA_ECOLI</name>
<gene>
    <name type="primary">pstA</name>
    <name type="synonym">phoT</name>
    <name type="ordered locus">b3726</name>
    <name type="ordered locus">JW3704</name>
</gene>
<evidence type="ECO:0000255" key="1"/>
<evidence type="ECO:0000255" key="2">
    <source>
        <dbReference type="PROSITE-ProRule" id="PRU00441"/>
    </source>
</evidence>
<evidence type="ECO:0000269" key="3">
    <source>
    </source>
</evidence>
<evidence type="ECO:0000305" key="4"/>
<comment type="function">
    <text>Part of the binding-protein-dependent transport system for phosphate; probably responsible for the translocation of the substrate across the membrane.</text>
</comment>
<comment type="subcellular location">
    <subcellularLocation>
        <location evidence="3">Cell inner membrane</location>
        <topology evidence="2 3">Multi-pass membrane protein</topology>
    </subcellularLocation>
</comment>
<comment type="similarity">
    <text evidence="4">Belongs to the binding-protein-dependent transport system permease family. CysTW subfamily.</text>
</comment>
<protein>
    <recommendedName>
        <fullName>Phosphate transport system permease protein PstA</fullName>
    </recommendedName>
</protein>
<dbReference type="EMBL" id="X02723">
    <property type="protein sequence ID" value="CAA26508.1"/>
    <property type="molecule type" value="Genomic_DNA"/>
</dbReference>
<dbReference type="EMBL" id="K01992">
    <property type="protein sequence ID" value="AAA24380.1"/>
    <property type="molecule type" value="Genomic_DNA"/>
</dbReference>
<dbReference type="EMBL" id="L10328">
    <property type="protein sequence ID" value="AAA62077.1"/>
    <property type="molecule type" value="Genomic_DNA"/>
</dbReference>
<dbReference type="EMBL" id="U00096">
    <property type="protein sequence ID" value="AAC76749.1"/>
    <property type="molecule type" value="Genomic_DNA"/>
</dbReference>
<dbReference type="EMBL" id="AP009048">
    <property type="protein sequence ID" value="BAE77562.1"/>
    <property type="molecule type" value="Genomic_DNA"/>
</dbReference>
<dbReference type="PIR" id="B23311">
    <property type="entry name" value="BVECPT"/>
</dbReference>
<dbReference type="RefSeq" id="NP_418182.1">
    <property type="nucleotide sequence ID" value="NC_000913.3"/>
</dbReference>
<dbReference type="RefSeq" id="WP_001251998.1">
    <property type="nucleotide sequence ID" value="NZ_SSZK01000036.1"/>
</dbReference>
<dbReference type="SMR" id="P07654"/>
<dbReference type="BioGRID" id="4262142">
    <property type="interactions" value="13"/>
</dbReference>
<dbReference type="ComplexPortal" id="CPX-4381">
    <property type="entry name" value="Phosphate ABC transporter complex"/>
</dbReference>
<dbReference type="FunCoup" id="P07654">
    <property type="interactions" value="403"/>
</dbReference>
<dbReference type="STRING" id="511145.b3726"/>
<dbReference type="TCDB" id="3.A.1.7.1">
    <property type="family name" value="the atp-binding cassette (abc) superfamily"/>
</dbReference>
<dbReference type="PaxDb" id="511145-b3726"/>
<dbReference type="EnsemblBacteria" id="AAC76749">
    <property type="protein sequence ID" value="AAC76749"/>
    <property type="gene ID" value="b3726"/>
</dbReference>
<dbReference type="GeneID" id="948239"/>
<dbReference type="KEGG" id="ecj:JW3704"/>
<dbReference type="KEGG" id="eco:b3726"/>
<dbReference type="KEGG" id="ecoc:C3026_20195"/>
<dbReference type="PATRIC" id="fig|1411691.4.peg.2974"/>
<dbReference type="EchoBASE" id="EB0775"/>
<dbReference type="eggNOG" id="COG0581">
    <property type="taxonomic scope" value="Bacteria"/>
</dbReference>
<dbReference type="HOGENOM" id="CLU_033621_2_0_6"/>
<dbReference type="InParanoid" id="P07654"/>
<dbReference type="OMA" id="YDRAWAA"/>
<dbReference type="OrthoDB" id="9775069at2"/>
<dbReference type="PhylomeDB" id="P07654"/>
<dbReference type="BioCyc" id="EcoCyc:PSTA-MONOMER"/>
<dbReference type="BioCyc" id="MetaCyc:MONOMER-21699"/>
<dbReference type="BioCyc" id="MetaCyc:PSTA-MONOMER"/>
<dbReference type="PHI-base" id="PHI:8084"/>
<dbReference type="PRO" id="PR:P07654"/>
<dbReference type="Proteomes" id="UP000000625">
    <property type="component" value="Chromosome"/>
</dbReference>
<dbReference type="GO" id="GO:0055052">
    <property type="term" value="C:ATP-binding cassette (ABC) transporter complex, substrate-binding subunit-containing"/>
    <property type="evidence" value="ECO:0000303"/>
    <property type="project" value="ComplexPortal"/>
</dbReference>
<dbReference type="GO" id="GO:0016020">
    <property type="term" value="C:membrane"/>
    <property type="evidence" value="ECO:0000303"/>
    <property type="project" value="ComplexPortal"/>
</dbReference>
<dbReference type="GO" id="GO:0005315">
    <property type="term" value="F:phosphate transmembrane transporter activity"/>
    <property type="evidence" value="ECO:0000314"/>
    <property type="project" value="EcoCyc"/>
</dbReference>
<dbReference type="GO" id="GO:0006974">
    <property type="term" value="P:DNA damage response"/>
    <property type="evidence" value="ECO:0000270"/>
    <property type="project" value="EcoliWiki"/>
</dbReference>
<dbReference type="GO" id="GO:0035435">
    <property type="term" value="P:phosphate ion transmembrane transport"/>
    <property type="evidence" value="ECO:0000314"/>
    <property type="project" value="EcoCyc"/>
</dbReference>
<dbReference type="GO" id="GO:0006817">
    <property type="term" value="P:phosphate ion transport"/>
    <property type="evidence" value="ECO:0000314"/>
    <property type="project" value="EcoCyc"/>
</dbReference>
<dbReference type="CDD" id="cd06261">
    <property type="entry name" value="TM_PBP2"/>
    <property type="match status" value="1"/>
</dbReference>
<dbReference type="FunFam" id="1.10.3720.10:FF:000026">
    <property type="entry name" value="Phosphate transport system permease protein PstA"/>
    <property type="match status" value="1"/>
</dbReference>
<dbReference type="Gene3D" id="1.10.3720.10">
    <property type="entry name" value="MetI-like"/>
    <property type="match status" value="1"/>
</dbReference>
<dbReference type="InterPro" id="IPR000515">
    <property type="entry name" value="MetI-like"/>
</dbReference>
<dbReference type="InterPro" id="IPR035906">
    <property type="entry name" value="MetI-like_sf"/>
</dbReference>
<dbReference type="InterPro" id="IPR005672">
    <property type="entry name" value="Phosphate_PstA"/>
</dbReference>
<dbReference type="InterPro" id="IPR051408">
    <property type="entry name" value="Phosphate_transprt_permease"/>
</dbReference>
<dbReference type="NCBIfam" id="TIGR00974">
    <property type="entry name" value="3a0107s02c"/>
    <property type="match status" value="1"/>
</dbReference>
<dbReference type="NCBIfam" id="NF008430">
    <property type="entry name" value="PRK11268.1"/>
    <property type="match status" value="1"/>
</dbReference>
<dbReference type="PANTHER" id="PTHR42922">
    <property type="entry name" value="PHOSPHATE TRANSPORT SYSTEM PERMEASE PROTEIN PSTA"/>
    <property type="match status" value="1"/>
</dbReference>
<dbReference type="PANTHER" id="PTHR42922:SF1">
    <property type="entry name" value="PHOSPHATE TRANSPORT SYSTEM PERMEASE PROTEIN PSTA"/>
    <property type="match status" value="1"/>
</dbReference>
<dbReference type="Pfam" id="PF00528">
    <property type="entry name" value="BPD_transp_1"/>
    <property type="match status" value="1"/>
</dbReference>
<dbReference type="SUPFAM" id="SSF161098">
    <property type="entry name" value="MetI-like"/>
    <property type="match status" value="1"/>
</dbReference>
<dbReference type="PROSITE" id="PS50928">
    <property type="entry name" value="ABC_TM1"/>
    <property type="match status" value="1"/>
</dbReference>
<sequence>MAMVEMQTTAALAESRRKMQARRRLKNRIALTLSMATMAFGLFWLIWILMSTITRGIDGMSLALFTEMTPPPNTEGGGLANALAGSGLLILWATVFGTPLGIMAGIYLAEYGRKSWLAEVIRFINDILLSAPSIVVGLFVYTIVVAQMEHFSGWAGVIALALLQVPIVIRTTENMLKLVPYSLREAAYALGTPKWKMISAITLKASVSGIMTGILLAIARIAGETAPLLFTALSNQFWSTDMMQPIANLPVTIFKFAMSPFAEWQQLAWAGVLIITLCVLLLNILARVVFAKNKHG</sequence>
<feature type="chain" id="PRO_0000060193" description="Phosphate transport system permease protein PstA">
    <location>
        <begin position="1"/>
        <end position="296"/>
    </location>
</feature>
<feature type="topological domain" description="Cytoplasmic" evidence="1">
    <location>
        <begin position="1"/>
        <end position="28"/>
    </location>
</feature>
<feature type="transmembrane region" description="Helical" evidence="2">
    <location>
        <begin position="29"/>
        <end position="50"/>
    </location>
</feature>
<feature type="topological domain" description="Periplasmic" evidence="1">
    <location>
        <begin position="51"/>
        <end position="82"/>
    </location>
</feature>
<feature type="transmembrane region" description="Helical" evidence="2">
    <location>
        <begin position="83"/>
        <end position="102"/>
    </location>
</feature>
<feature type="topological domain" description="Cytoplasmic" evidence="1">
    <location>
        <begin position="103"/>
        <end position="126"/>
    </location>
</feature>
<feature type="transmembrane region" description="Helical" evidence="2">
    <location>
        <begin position="127"/>
        <end position="146"/>
    </location>
</feature>
<feature type="topological domain" description="Periplasmic" evidence="1">
    <location>
        <begin position="147"/>
        <end position="150"/>
    </location>
</feature>
<feature type="transmembrane region" description="Helical" evidence="2">
    <location>
        <begin position="151"/>
        <end position="169"/>
    </location>
</feature>
<feature type="topological domain" description="Cytoplasmic" evidence="1">
    <location>
        <begin position="170"/>
        <end position="204"/>
    </location>
</feature>
<feature type="transmembrane region" description="Helical" evidence="2">
    <location>
        <begin position="205"/>
        <end position="223"/>
    </location>
</feature>
<feature type="topological domain" description="Periplasmic" evidence="1">
    <location>
        <begin position="224"/>
        <end position="266"/>
    </location>
</feature>
<feature type="transmembrane region" description="Helical" evidence="2">
    <location>
        <begin position="267"/>
        <end position="286"/>
    </location>
</feature>
<feature type="topological domain" description="Cytoplasmic" evidence="1">
    <location>
        <begin position="287"/>
        <end position="296"/>
    </location>
</feature>
<feature type="domain" description="ABC transmembrane type-1" evidence="2">
    <location>
        <begin position="83"/>
        <end position="286"/>
    </location>
</feature>
<accession>P07654</accession>
<accession>Q2M844</accession>